<proteinExistence type="evidence at protein level"/>
<organism>
    <name type="scientific">Homo sapiens</name>
    <name type="common">Human</name>
    <dbReference type="NCBI Taxonomy" id="9606"/>
    <lineage>
        <taxon>Eukaryota</taxon>
        <taxon>Metazoa</taxon>
        <taxon>Chordata</taxon>
        <taxon>Craniata</taxon>
        <taxon>Vertebrata</taxon>
        <taxon>Euteleostomi</taxon>
        <taxon>Mammalia</taxon>
        <taxon>Eutheria</taxon>
        <taxon>Euarchontoglires</taxon>
        <taxon>Primates</taxon>
        <taxon>Haplorrhini</taxon>
        <taxon>Catarrhini</taxon>
        <taxon>Hominidae</taxon>
        <taxon>Homo</taxon>
    </lineage>
</organism>
<dbReference type="EMBL" id="AB040975">
    <property type="protein sequence ID" value="BAA96066.1"/>
    <property type="status" value="ALT_INIT"/>
    <property type="molecule type" value="mRNA"/>
</dbReference>
<dbReference type="EMBL" id="AP006284">
    <property type="status" value="NOT_ANNOTATED_CDS"/>
    <property type="molecule type" value="Genomic_DNA"/>
</dbReference>
<dbReference type="EMBL" id="BC004950">
    <property type="protein sequence ID" value="AAH04950.1"/>
    <property type="molecule type" value="mRNA"/>
</dbReference>
<dbReference type="EMBL" id="BC013381">
    <property type="protein sequence ID" value="AAH13381.1"/>
    <property type="molecule type" value="mRNA"/>
</dbReference>
<dbReference type="EMBL" id="BC029651">
    <property type="protein sequence ID" value="AAH29651.1"/>
    <property type="molecule type" value="mRNA"/>
</dbReference>
<dbReference type="EMBL" id="BC041631">
    <property type="protein sequence ID" value="AAH41631.1"/>
    <property type="molecule type" value="mRNA"/>
</dbReference>
<dbReference type="EMBL" id="BC136615">
    <property type="protein sequence ID" value="AAI36616.1"/>
    <property type="molecule type" value="mRNA"/>
</dbReference>
<dbReference type="EMBL" id="BC144293">
    <property type="protein sequence ID" value="AAI44294.1"/>
    <property type="molecule type" value="mRNA"/>
</dbReference>
<dbReference type="EMBL" id="BC146771">
    <property type="protein sequence ID" value="AAI46772.1"/>
    <property type="molecule type" value="mRNA"/>
</dbReference>
<dbReference type="CCDS" id="CCDS44507.1">
    <molecule id="Q9P1Y6-3"/>
</dbReference>
<dbReference type="CCDS" id="CCDS65988.1">
    <molecule id="Q9P1Y6-1"/>
</dbReference>
<dbReference type="RefSeq" id="NP_001273510.1">
    <molecule id="Q9P1Y6-1"/>
    <property type="nucleotide sequence ID" value="NM_001286581.2"/>
</dbReference>
<dbReference type="RefSeq" id="NP_001273511.1">
    <property type="nucleotide sequence ID" value="NM_001286582.1"/>
</dbReference>
<dbReference type="RefSeq" id="NP_001273512.1">
    <property type="nucleotide sequence ID" value="NM_001286583.1"/>
</dbReference>
<dbReference type="RefSeq" id="NP_065952.2">
    <molecule id="Q9P1Y6-3"/>
    <property type="nucleotide sequence ID" value="NM_020901.4"/>
</dbReference>
<dbReference type="SMR" id="Q9P1Y6"/>
<dbReference type="BioGRID" id="121694">
    <property type="interactions" value="64"/>
</dbReference>
<dbReference type="FunCoup" id="Q9P1Y6">
    <property type="interactions" value="1261"/>
</dbReference>
<dbReference type="IntAct" id="Q9P1Y6">
    <property type="interactions" value="23"/>
</dbReference>
<dbReference type="MINT" id="Q9P1Y6"/>
<dbReference type="STRING" id="9606.ENSP00000264555"/>
<dbReference type="GlyCosmos" id="Q9P1Y6">
    <property type="glycosylation" value="1 site, 1 glycan"/>
</dbReference>
<dbReference type="GlyGen" id="Q9P1Y6">
    <property type="glycosylation" value="4 sites, 1 N-linked glycan (1 site), 1 O-linked glycan (3 sites)"/>
</dbReference>
<dbReference type="iPTMnet" id="Q9P1Y6"/>
<dbReference type="PhosphoSitePlus" id="Q9P1Y6"/>
<dbReference type="BioMuta" id="PHRF1"/>
<dbReference type="DMDM" id="296439275"/>
<dbReference type="jPOST" id="Q9P1Y6"/>
<dbReference type="MassIVE" id="Q9P1Y6"/>
<dbReference type="PaxDb" id="9606-ENSP00000264555"/>
<dbReference type="PeptideAtlas" id="Q9P1Y6"/>
<dbReference type="ProteomicsDB" id="83679">
    <molecule id="Q9P1Y6-1"/>
</dbReference>
<dbReference type="ProteomicsDB" id="83680">
    <molecule id="Q9P1Y6-2"/>
</dbReference>
<dbReference type="ProteomicsDB" id="83681">
    <molecule id="Q9P1Y6-3"/>
</dbReference>
<dbReference type="Pumba" id="Q9P1Y6"/>
<dbReference type="Antibodypedia" id="5345">
    <property type="antibodies" value="23 antibodies from 11 providers"/>
</dbReference>
<dbReference type="DNASU" id="57661"/>
<dbReference type="Ensembl" id="ENST00000264555.10">
    <molecule id="Q9P1Y6-1"/>
    <property type="protein sequence ID" value="ENSP00000264555.5"/>
    <property type="gene ID" value="ENSG00000070047.13"/>
</dbReference>
<dbReference type="Ensembl" id="ENST00000416188.3">
    <molecule id="Q9P1Y6-3"/>
    <property type="protein sequence ID" value="ENSP00000410626.2"/>
    <property type="gene ID" value="ENSG00000070047.13"/>
</dbReference>
<dbReference type="Ensembl" id="ENST00000534320.5">
    <molecule id="Q9P1Y6-2"/>
    <property type="protein sequence ID" value="ENSP00000435360.1"/>
    <property type="gene ID" value="ENSG00000070047.13"/>
</dbReference>
<dbReference type="Ensembl" id="ENST00000616346.2">
    <property type="protein sequence ID" value="ENSP00000483129.1"/>
    <property type="gene ID" value="ENSG00000274780.2"/>
</dbReference>
<dbReference type="GeneID" id="57661"/>
<dbReference type="KEGG" id="hsa:57661"/>
<dbReference type="MANE-Select" id="ENST00000264555.10">
    <property type="protein sequence ID" value="ENSP00000264555.5"/>
    <property type="RefSeq nucleotide sequence ID" value="NM_001286581.2"/>
    <property type="RefSeq protein sequence ID" value="NP_001273510.1"/>
</dbReference>
<dbReference type="UCSC" id="uc001lqe.5">
    <molecule id="Q9P1Y6-1"/>
    <property type="organism name" value="human"/>
</dbReference>
<dbReference type="AGR" id="HGNC:24351"/>
<dbReference type="CTD" id="57661"/>
<dbReference type="DisGeNET" id="57661"/>
<dbReference type="GeneCards" id="PHRF1"/>
<dbReference type="HGNC" id="HGNC:24351">
    <property type="gene designation" value="PHRF1"/>
</dbReference>
<dbReference type="HPA" id="ENSG00000070047">
    <property type="expression patterns" value="Low tissue specificity"/>
</dbReference>
<dbReference type="MIM" id="611780">
    <property type="type" value="gene"/>
</dbReference>
<dbReference type="neXtProt" id="NX_Q9P1Y6"/>
<dbReference type="OpenTargets" id="ENSG00000070047"/>
<dbReference type="PharmGKB" id="PA164718737"/>
<dbReference type="PharmGKB" id="PA164724459"/>
<dbReference type="VEuPathDB" id="HostDB:ENSG00000070047"/>
<dbReference type="eggNOG" id="KOG0825">
    <property type="taxonomic scope" value="Eukaryota"/>
</dbReference>
<dbReference type="GeneTree" id="ENSGT00950000183205"/>
<dbReference type="InParanoid" id="Q9P1Y6"/>
<dbReference type="OMA" id="VENTRAC"/>
<dbReference type="OrthoDB" id="1935339at2759"/>
<dbReference type="PAN-GO" id="Q9P1Y6">
    <property type="GO annotations" value="0 GO annotations based on evolutionary models"/>
</dbReference>
<dbReference type="PhylomeDB" id="Q9P1Y6"/>
<dbReference type="TreeFam" id="TF332183"/>
<dbReference type="PathwayCommons" id="Q9P1Y6"/>
<dbReference type="SignaLink" id="Q9P1Y6"/>
<dbReference type="SIGNOR" id="Q9P1Y6"/>
<dbReference type="BioGRID-ORCS" id="57661">
    <property type="hits" value="15 hits in 1193 CRISPR screens"/>
</dbReference>
<dbReference type="ChiTaRS" id="PHRF1">
    <property type="organism name" value="human"/>
</dbReference>
<dbReference type="GenomeRNAi" id="57661"/>
<dbReference type="Pharos" id="Q9P1Y6">
    <property type="development level" value="Tbio"/>
</dbReference>
<dbReference type="PRO" id="PR:Q9P1Y6"/>
<dbReference type="Proteomes" id="UP000005640">
    <property type="component" value="Chromosome 11"/>
</dbReference>
<dbReference type="RNAct" id="Q9P1Y6">
    <property type="molecule type" value="protein"/>
</dbReference>
<dbReference type="Bgee" id="ENSG00000070047">
    <property type="expression patterns" value="Expressed in sural nerve and 96 other cell types or tissues"/>
</dbReference>
<dbReference type="ExpressionAtlas" id="Q9P1Y6">
    <property type="expression patterns" value="baseline and differential"/>
</dbReference>
<dbReference type="GO" id="GO:0016020">
    <property type="term" value="C:membrane"/>
    <property type="evidence" value="ECO:0007005"/>
    <property type="project" value="UniProtKB"/>
</dbReference>
<dbReference type="GO" id="GO:0070063">
    <property type="term" value="F:RNA polymerase binding"/>
    <property type="evidence" value="ECO:0000250"/>
    <property type="project" value="UniProtKB"/>
</dbReference>
<dbReference type="GO" id="GO:0008270">
    <property type="term" value="F:zinc ion binding"/>
    <property type="evidence" value="ECO:0007669"/>
    <property type="project" value="UniProtKB-KW"/>
</dbReference>
<dbReference type="GO" id="GO:0016567">
    <property type="term" value="P:protein ubiquitination"/>
    <property type="evidence" value="ECO:0007669"/>
    <property type="project" value="UniProtKB-ARBA"/>
</dbReference>
<dbReference type="CDD" id="cd16635">
    <property type="entry name" value="mRING-HC-C3HC3D_PHRF1"/>
    <property type="match status" value="1"/>
</dbReference>
<dbReference type="CDD" id="cd15536">
    <property type="entry name" value="PHD_PHRF1"/>
    <property type="match status" value="1"/>
</dbReference>
<dbReference type="FunFam" id="3.30.40.10:FF:000511">
    <property type="entry name" value="PHD and RING finger domain-containing protein 1"/>
    <property type="match status" value="1"/>
</dbReference>
<dbReference type="FunFam" id="3.30.40.10:FF:000526">
    <property type="entry name" value="PHD and ring finger domains 1"/>
    <property type="match status" value="1"/>
</dbReference>
<dbReference type="Gene3D" id="3.30.40.10">
    <property type="entry name" value="Zinc/RING finger domain, C3HC4 (zinc finger)"/>
    <property type="match status" value="2"/>
</dbReference>
<dbReference type="InterPro" id="IPR047157">
    <property type="entry name" value="PHRF1/Atg35"/>
</dbReference>
<dbReference type="InterPro" id="IPR057031">
    <property type="entry name" value="SCAF11-like_C"/>
</dbReference>
<dbReference type="InterPro" id="IPR011011">
    <property type="entry name" value="Znf_FYVE_PHD"/>
</dbReference>
<dbReference type="InterPro" id="IPR001965">
    <property type="entry name" value="Znf_PHD"/>
</dbReference>
<dbReference type="InterPro" id="IPR019787">
    <property type="entry name" value="Znf_PHD-finger"/>
</dbReference>
<dbReference type="InterPro" id="IPR001841">
    <property type="entry name" value="Znf_RING"/>
</dbReference>
<dbReference type="InterPro" id="IPR013083">
    <property type="entry name" value="Znf_RING/FYVE/PHD"/>
</dbReference>
<dbReference type="InterPro" id="IPR017907">
    <property type="entry name" value="Znf_RING_CS"/>
</dbReference>
<dbReference type="PANTHER" id="PTHR12618">
    <property type="entry name" value="PHD AND RING FINGER DOMAIN-CONTAINING PROTEIN 1"/>
    <property type="match status" value="1"/>
</dbReference>
<dbReference type="PANTHER" id="PTHR12618:SF20">
    <property type="entry name" value="PHD AND RING FINGER DOMAIN-CONTAINING PROTEIN 1"/>
    <property type="match status" value="1"/>
</dbReference>
<dbReference type="Pfam" id="PF00628">
    <property type="entry name" value="PHD"/>
    <property type="match status" value="1"/>
</dbReference>
<dbReference type="Pfam" id="PF23030">
    <property type="entry name" value="SCAF11-like_C"/>
    <property type="match status" value="1"/>
</dbReference>
<dbReference type="Pfam" id="PF13639">
    <property type="entry name" value="zf-RING_2"/>
    <property type="match status" value="1"/>
</dbReference>
<dbReference type="SMART" id="SM00249">
    <property type="entry name" value="PHD"/>
    <property type="match status" value="1"/>
</dbReference>
<dbReference type="SMART" id="SM00184">
    <property type="entry name" value="RING"/>
    <property type="match status" value="2"/>
</dbReference>
<dbReference type="SUPFAM" id="SSF57903">
    <property type="entry name" value="FYVE/PHD zinc finger"/>
    <property type="match status" value="1"/>
</dbReference>
<dbReference type="SUPFAM" id="SSF57850">
    <property type="entry name" value="RING/U-box"/>
    <property type="match status" value="1"/>
</dbReference>
<dbReference type="PROSITE" id="PS01359">
    <property type="entry name" value="ZF_PHD_1"/>
    <property type="match status" value="1"/>
</dbReference>
<dbReference type="PROSITE" id="PS50016">
    <property type="entry name" value="ZF_PHD_2"/>
    <property type="match status" value="1"/>
</dbReference>
<dbReference type="PROSITE" id="PS00518">
    <property type="entry name" value="ZF_RING_1"/>
    <property type="match status" value="1"/>
</dbReference>
<dbReference type="PROSITE" id="PS50089">
    <property type="entry name" value="ZF_RING_2"/>
    <property type="match status" value="1"/>
</dbReference>
<name>PHRF1_HUMAN</name>
<reference key="1">
    <citation type="journal article" date="2000" name="DNA Res.">
        <title>Prediction of the coding sequences of unidentified human genes. XVIII. The complete sequences of 100 new cDNA clones from brain which code for large proteins in vitro.</title>
        <authorList>
            <person name="Nagase T."/>
            <person name="Kikuno R."/>
            <person name="Nakayama M."/>
            <person name="Hirosawa M."/>
            <person name="Ohara O."/>
        </authorList>
    </citation>
    <scope>NUCLEOTIDE SEQUENCE [LARGE SCALE MRNA] (ISOFORM 1)</scope>
    <scope>VARIANT ALA-1449</scope>
    <source>
        <tissue>Brain</tissue>
    </source>
</reference>
<reference key="2">
    <citation type="journal article" date="2006" name="Nature">
        <title>Human chromosome 11 DNA sequence and analysis including novel gene identification.</title>
        <authorList>
            <person name="Taylor T.D."/>
            <person name="Noguchi H."/>
            <person name="Totoki Y."/>
            <person name="Toyoda A."/>
            <person name="Kuroki Y."/>
            <person name="Dewar K."/>
            <person name="Lloyd C."/>
            <person name="Itoh T."/>
            <person name="Takeda T."/>
            <person name="Kim D.-W."/>
            <person name="She X."/>
            <person name="Barlow K.F."/>
            <person name="Bloom T."/>
            <person name="Bruford E."/>
            <person name="Chang J.L."/>
            <person name="Cuomo C.A."/>
            <person name="Eichler E."/>
            <person name="FitzGerald M.G."/>
            <person name="Jaffe D.B."/>
            <person name="LaButti K."/>
            <person name="Nicol R."/>
            <person name="Park H.-S."/>
            <person name="Seaman C."/>
            <person name="Sougnez C."/>
            <person name="Yang X."/>
            <person name="Zimmer A.R."/>
            <person name="Zody M.C."/>
            <person name="Birren B.W."/>
            <person name="Nusbaum C."/>
            <person name="Fujiyama A."/>
            <person name="Hattori M."/>
            <person name="Rogers J."/>
            <person name="Lander E.S."/>
            <person name="Sakaki Y."/>
        </authorList>
    </citation>
    <scope>NUCLEOTIDE SEQUENCE [LARGE SCALE GENOMIC DNA]</scope>
</reference>
<reference key="3">
    <citation type="journal article" date="2004" name="Genome Res.">
        <title>The status, quality, and expansion of the NIH full-length cDNA project: the Mammalian Gene Collection (MGC).</title>
        <authorList>
            <consortium name="The MGC Project Team"/>
        </authorList>
    </citation>
    <scope>NUCLEOTIDE SEQUENCE [LARGE SCALE MRNA] (ISOFORMS 1 AND 3)</scope>
    <scope>NUCLEOTIDE SEQUENCE [LARGE SCALE MRNA] OF 1094-1649 (ISOFORM 2)</scope>
    <scope>VARIANT ALA-1449</scope>
    <source>
        <tissue>Brain</tissue>
        <tissue>Lymph</tissue>
        <tissue>Uterus</tissue>
    </source>
</reference>
<reference key="4">
    <citation type="journal article" date="2006" name="Cell">
        <title>Global, in vivo, and site-specific phosphorylation dynamics in signaling networks.</title>
        <authorList>
            <person name="Olsen J.V."/>
            <person name="Blagoev B."/>
            <person name="Gnad F."/>
            <person name="Macek B."/>
            <person name="Kumar C."/>
            <person name="Mortensen P."/>
            <person name="Mann M."/>
        </authorList>
    </citation>
    <scope>PHOSPHORYLATION [LARGE SCALE ANALYSIS] AT SER-991 AND SER-1202</scope>
    <scope>IDENTIFICATION BY MASS SPECTROMETRY [LARGE SCALE ANALYSIS]</scope>
    <source>
        <tissue>Cervix carcinoma</tissue>
    </source>
</reference>
<reference key="5">
    <citation type="journal article" date="2008" name="Proc. Natl. Acad. Sci. U.S.A.">
        <title>A quantitative atlas of mitotic phosphorylation.</title>
        <authorList>
            <person name="Dephoure N."/>
            <person name="Zhou C."/>
            <person name="Villen J."/>
            <person name="Beausoleil S.A."/>
            <person name="Bakalarski C.E."/>
            <person name="Elledge S.J."/>
            <person name="Gygi S.P."/>
        </authorList>
    </citation>
    <scope>PHOSPHORYLATION [LARGE SCALE ANALYSIS] AT SER-864; SER-867; SER-1128 AND SER-1202</scope>
    <scope>IDENTIFICATION BY MASS SPECTROMETRY [LARGE SCALE ANALYSIS]</scope>
    <source>
        <tissue>Cervix carcinoma</tissue>
    </source>
</reference>
<reference key="6">
    <citation type="journal article" date="2009" name="Anal. Chem.">
        <title>Lys-N and trypsin cover complementary parts of the phosphoproteome in a refined SCX-based approach.</title>
        <authorList>
            <person name="Gauci S."/>
            <person name="Helbig A.O."/>
            <person name="Slijper M."/>
            <person name="Krijgsveld J."/>
            <person name="Heck A.J."/>
            <person name="Mohammed S."/>
        </authorList>
    </citation>
    <scope>IDENTIFICATION BY MASS SPECTROMETRY [LARGE SCALE ANALYSIS]</scope>
</reference>
<reference key="7">
    <citation type="journal article" date="2009" name="Sci. Signal.">
        <title>Quantitative phosphoproteomic analysis of T cell receptor signaling reveals system-wide modulation of protein-protein interactions.</title>
        <authorList>
            <person name="Mayya V."/>
            <person name="Lundgren D.H."/>
            <person name="Hwang S.-I."/>
            <person name="Rezaul K."/>
            <person name="Wu L."/>
            <person name="Eng J.K."/>
            <person name="Rodionov V."/>
            <person name="Han D.K."/>
        </authorList>
    </citation>
    <scope>PHOSPHORYLATION [LARGE SCALE ANALYSIS] AT THR-330; SER-915; THR-917; SER-936; SER-1359; SER-1360; SER-1371 AND THR-1404</scope>
    <scope>IDENTIFICATION BY MASS SPECTROMETRY [LARGE SCALE ANALYSIS]</scope>
    <source>
        <tissue>Leukemic T-cell</tissue>
    </source>
</reference>
<reference key="8">
    <citation type="journal article" date="2010" name="Sci. Signal.">
        <title>Quantitative phosphoproteomics reveals widespread full phosphorylation site occupancy during mitosis.</title>
        <authorList>
            <person name="Olsen J.V."/>
            <person name="Vermeulen M."/>
            <person name="Santamaria A."/>
            <person name="Kumar C."/>
            <person name="Miller M.L."/>
            <person name="Jensen L.J."/>
            <person name="Gnad F."/>
            <person name="Cox J."/>
            <person name="Jensen T.S."/>
            <person name="Nigg E.A."/>
            <person name="Brunak S."/>
            <person name="Mann M."/>
        </authorList>
    </citation>
    <scope>PHOSPHORYLATION [LARGE SCALE ANALYSIS] AT SER-455 AND SER-991</scope>
    <scope>IDENTIFICATION BY MASS SPECTROMETRY [LARGE SCALE ANALYSIS]</scope>
    <source>
        <tissue>Cervix carcinoma</tissue>
    </source>
</reference>
<reference key="9">
    <citation type="journal article" date="2011" name="Sci. Signal.">
        <title>System-wide temporal characterization of the proteome and phosphoproteome of human embryonic stem cell differentiation.</title>
        <authorList>
            <person name="Rigbolt K.T."/>
            <person name="Prokhorova T.A."/>
            <person name="Akimov V."/>
            <person name="Henningsen J."/>
            <person name="Johansen P.T."/>
            <person name="Kratchmarova I."/>
            <person name="Kassem M."/>
            <person name="Mann M."/>
            <person name="Olsen J.V."/>
            <person name="Blagoev B."/>
        </authorList>
    </citation>
    <scope>PHOSPHORYLATION [LARGE SCALE ANALYSIS] AT SER-867 AND SER-1360</scope>
    <scope>IDENTIFICATION BY MASS SPECTROMETRY [LARGE SCALE ANALYSIS]</scope>
</reference>
<reference key="10">
    <citation type="journal article" date="2013" name="J. Proteome Res.">
        <title>Toward a comprehensive characterization of a human cancer cell phosphoproteome.</title>
        <authorList>
            <person name="Zhou H."/>
            <person name="Di Palma S."/>
            <person name="Preisinger C."/>
            <person name="Peng M."/>
            <person name="Polat A.N."/>
            <person name="Heck A.J."/>
            <person name="Mohammed S."/>
        </authorList>
    </citation>
    <scope>PHOSPHORYLATION [LARGE SCALE ANALYSIS] AT SER-5; SER-814; SER-846; SER-867; SER-915; SER-936; SER-973; SER-991; SER-1124; SER-1202; SER-1229; SER-1360 AND SER-1371</scope>
    <scope>IDENTIFICATION BY MASS SPECTROMETRY [LARGE SCALE ANALYSIS]</scope>
    <source>
        <tissue>Cervix carcinoma</tissue>
        <tissue>Erythroleukemia</tissue>
    </source>
</reference>
<reference key="11">
    <citation type="journal article" date="2014" name="J. Proteomics">
        <title>An enzyme assisted RP-RPLC approach for in-depth analysis of human liver phosphoproteome.</title>
        <authorList>
            <person name="Bian Y."/>
            <person name="Song C."/>
            <person name="Cheng K."/>
            <person name="Dong M."/>
            <person name="Wang F."/>
            <person name="Huang J."/>
            <person name="Sun D."/>
            <person name="Wang L."/>
            <person name="Ye M."/>
            <person name="Zou H."/>
        </authorList>
    </citation>
    <scope>PHOSPHORYLATION [LARGE SCALE ANALYSIS] AT SER-814; SER-845; SER-915; SER-973; SER-1202; SER-1229 AND SER-1360</scope>
    <scope>IDENTIFICATION BY MASS SPECTROMETRY [LARGE SCALE ANALYSIS]</scope>
    <source>
        <tissue>Liver</tissue>
    </source>
</reference>
<comment type="subunit">
    <text evidence="1">Interacts with POLR2A (via the C-terminal domain).</text>
</comment>
<comment type="interaction">
    <interactant intactId="EBI-3937171">
        <id>Q9P1Y6</id>
    </interactant>
    <interactant intactId="EBI-348169">
        <id>P67870</id>
        <label>CSNK2B</label>
    </interactant>
    <organismsDiffer>false</organismsDiffer>
    <experiments>3</experiments>
</comment>
<comment type="alternative products">
    <event type="alternative splicing"/>
    <isoform>
        <id>Q9P1Y6-1</id>
        <name>1</name>
        <sequence type="displayed"/>
    </isoform>
    <isoform>
        <id>Q9P1Y6-2</id>
        <name>2</name>
        <sequence type="described" ref="VSP_023247 VSP_023248"/>
    </isoform>
    <isoform>
        <id>Q9P1Y6-3</id>
        <name>3</name>
        <sequence type="described" ref="VSP_039187"/>
    </isoform>
</comment>
<comment type="sequence caution" evidence="10">
    <conflict type="erroneous initiation">
        <sequence resource="EMBL-CDS" id="BAA96066"/>
    </conflict>
    <text>Extended N-terminus.</text>
</comment>
<evidence type="ECO:0000250" key="1"/>
<evidence type="ECO:0000250" key="2">
    <source>
        <dbReference type="UniProtKB" id="Q63625"/>
    </source>
</evidence>
<evidence type="ECO:0000255" key="3"/>
<evidence type="ECO:0000255" key="4">
    <source>
        <dbReference type="PROSITE-ProRule" id="PRU00146"/>
    </source>
</evidence>
<evidence type="ECO:0000255" key="5">
    <source>
        <dbReference type="PROSITE-ProRule" id="PRU00175"/>
    </source>
</evidence>
<evidence type="ECO:0000256" key="6">
    <source>
        <dbReference type="SAM" id="MobiDB-lite"/>
    </source>
</evidence>
<evidence type="ECO:0000269" key="7">
    <source>
    </source>
</evidence>
<evidence type="ECO:0000269" key="8">
    <source>
    </source>
</evidence>
<evidence type="ECO:0000303" key="9">
    <source>
    </source>
</evidence>
<evidence type="ECO:0000305" key="10"/>
<evidence type="ECO:0007744" key="11">
    <source>
    </source>
</evidence>
<evidence type="ECO:0007744" key="12">
    <source>
    </source>
</evidence>
<evidence type="ECO:0007744" key="13">
    <source>
    </source>
</evidence>
<evidence type="ECO:0007744" key="14">
    <source>
    </source>
</evidence>
<evidence type="ECO:0007744" key="15">
    <source>
    </source>
</evidence>
<evidence type="ECO:0007744" key="16">
    <source>
    </source>
</evidence>
<evidence type="ECO:0007744" key="17">
    <source>
    </source>
</evidence>
<keyword id="KW-0025">Alternative splicing</keyword>
<keyword id="KW-0175">Coiled coil</keyword>
<keyword id="KW-0479">Metal-binding</keyword>
<keyword id="KW-0597">Phosphoprotein</keyword>
<keyword id="KW-1267">Proteomics identification</keyword>
<keyword id="KW-1185">Reference proteome</keyword>
<keyword id="KW-0862">Zinc</keyword>
<keyword id="KW-0863">Zinc-finger</keyword>
<gene>
    <name type="primary">PHRF1</name>
    <name type="synonym">KIAA1542</name>
</gene>
<feature type="chain" id="PRO_0000278266" description="PHD and RING finger domain-containing protein 1">
    <location>
        <begin position="1"/>
        <end position="1649"/>
    </location>
</feature>
<feature type="zinc finger region" description="RING-type; degenerate" evidence="5">
    <location>
        <begin position="108"/>
        <end position="149"/>
    </location>
</feature>
<feature type="zinc finger region" description="PHD-type" evidence="4">
    <location>
        <begin position="183"/>
        <end position="233"/>
    </location>
</feature>
<feature type="region of interest" description="Disordered" evidence="6">
    <location>
        <begin position="1"/>
        <end position="79"/>
    </location>
</feature>
<feature type="region of interest" description="Disordered" evidence="6">
    <location>
        <begin position="324"/>
        <end position="398"/>
    </location>
</feature>
<feature type="region of interest" description="Disordered" evidence="6">
    <location>
        <begin position="534"/>
        <end position="600"/>
    </location>
</feature>
<feature type="region of interest" description="Disordered" evidence="6">
    <location>
        <begin position="644"/>
        <end position="871"/>
    </location>
</feature>
<feature type="region of interest" description="Disordered" evidence="6">
    <location>
        <begin position="888"/>
        <end position="1240"/>
    </location>
</feature>
<feature type="region of interest" description="Disordered" evidence="6">
    <location>
        <begin position="1281"/>
        <end position="1395"/>
    </location>
</feature>
<feature type="region of interest" description="Disordered" evidence="6">
    <location>
        <begin position="1407"/>
        <end position="1439"/>
    </location>
</feature>
<feature type="region of interest" description="Disordered" evidence="6">
    <location>
        <begin position="1455"/>
        <end position="1486"/>
    </location>
</feature>
<feature type="region of interest" description="Disordered" evidence="6">
    <location>
        <begin position="1526"/>
        <end position="1556"/>
    </location>
</feature>
<feature type="region of interest" description="Disordered" evidence="6">
    <location>
        <begin position="1630"/>
        <end position="1649"/>
    </location>
</feature>
<feature type="coiled-coil region" evidence="3">
    <location>
        <begin position="1549"/>
        <end position="1579"/>
    </location>
</feature>
<feature type="compositionally biased region" description="Acidic residues" evidence="6">
    <location>
        <begin position="54"/>
        <end position="79"/>
    </location>
</feature>
<feature type="compositionally biased region" description="Basic residues" evidence="6">
    <location>
        <begin position="334"/>
        <end position="353"/>
    </location>
</feature>
<feature type="compositionally biased region" description="Low complexity" evidence="6">
    <location>
        <begin position="354"/>
        <end position="366"/>
    </location>
</feature>
<feature type="compositionally biased region" description="Basic residues" evidence="6">
    <location>
        <begin position="367"/>
        <end position="382"/>
    </location>
</feature>
<feature type="compositionally biased region" description="Polar residues" evidence="6">
    <location>
        <begin position="568"/>
        <end position="589"/>
    </location>
</feature>
<feature type="compositionally biased region" description="Basic and acidic residues" evidence="6">
    <location>
        <begin position="685"/>
        <end position="697"/>
    </location>
</feature>
<feature type="compositionally biased region" description="Basic and acidic residues" evidence="6">
    <location>
        <begin position="727"/>
        <end position="742"/>
    </location>
</feature>
<feature type="compositionally biased region" description="Polar residues" evidence="6">
    <location>
        <begin position="786"/>
        <end position="796"/>
    </location>
</feature>
<feature type="compositionally biased region" description="Basic and acidic residues" evidence="6">
    <location>
        <begin position="802"/>
        <end position="812"/>
    </location>
</feature>
<feature type="compositionally biased region" description="Polar residues" evidence="6">
    <location>
        <begin position="835"/>
        <end position="848"/>
    </location>
</feature>
<feature type="compositionally biased region" description="Polar residues" evidence="6">
    <location>
        <begin position="859"/>
        <end position="871"/>
    </location>
</feature>
<feature type="compositionally biased region" description="Low complexity" evidence="6">
    <location>
        <begin position="988"/>
        <end position="999"/>
    </location>
</feature>
<feature type="compositionally biased region" description="Basic residues" evidence="6">
    <location>
        <begin position="1000"/>
        <end position="1011"/>
    </location>
</feature>
<feature type="compositionally biased region" description="Basic and acidic residues" evidence="6">
    <location>
        <begin position="1012"/>
        <end position="1030"/>
    </location>
</feature>
<feature type="compositionally biased region" description="Basic residues" evidence="6">
    <location>
        <begin position="1043"/>
        <end position="1053"/>
    </location>
</feature>
<feature type="compositionally biased region" description="Basic and acidic residues" evidence="6">
    <location>
        <begin position="1054"/>
        <end position="1063"/>
    </location>
</feature>
<feature type="compositionally biased region" description="Basic residues" evidence="6">
    <location>
        <begin position="1064"/>
        <end position="1090"/>
    </location>
</feature>
<feature type="compositionally biased region" description="Low complexity" evidence="6">
    <location>
        <begin position="1091"/>
        <end position="1101"/>
    </location>
</feature>
<feature type="compositionally biased region" description="Basic residues" evidence="6">
    <location>
        <begin position="1106"/>
        <end position="1118"/>
    </location>
</feature>
<feature type="compositionally biased region" description="Basic and acidic residues" evidence="6">
    <location>
        <begin position="1141"/>
        <end position="1151"/>
    </location>
</feature>
<feature type="compositionally biased region" description="Basic and acidic residues" evidence="6">
    <location>
        <begin position="1181"/>
        <end position="1198"/>
    </location>
</feature>
<feature type="compositionally biased region" description="Low complexity" evidence="6">
    <location>
        <begin position="1284"/>
        <end position="1297"/>
    </location>
</feature>
<feature type="compositionally biased region" description="Basic and acidic residues" evidence="6">
    <location>
        <begin position="1345"/>
        <end position="1356"/>
    </location>
</feature>
<feature type="compositionally biased region" description="Polar residues" evidence="6">
    <location>
        <begin position="1531"/>
        <end position="1540"/>
    </location>
</feature>
<feature type="compositionally biased region" description="Basic and acidic residues" evidence="6">
    <location>
        <begin position="1541"/>
        <end position="1556"/>
    </location>
</feature>
<feature type="modified residue" description="Phosphoserine" evidence="16">
    <location>
        <position position="5"/>
    </location>
</feature>
<feature type="modified residue" description="Phosphothreonine" evidence="13">
    <location>
        <position position="330"/>
    </location>
</feature>
<feature type="modified residue" description="Phosphoserine" evidence="2">
    <location>
        <position position="445"/>
    </location>
</feature>
<feature type="modified residue" description="Phosphoserine" evidence="14">
    <location>
        <position position="455"/>
    </location>
</feature>
<feature type="modified residue" description="Phosphoserine" evidence="16 17">
    <location>
        <position position="814"/>
    </location>
</feature>
<feature type="modified residue" description="Phosphoserine" evidence="17">
    <location>
        <position position="845"/>
    </location>
</feature>
<feature type="modified residue" description="Phosphoserine" evidence="16">
    <location>
        <position position="846"/>
    </location>
</feature>
<feature type="modified residue" description="Phosphoserine" evidence="12">
    <location>
        <position position="864"/>
    </location>
</feature>
<feature type="modified residue" description="Phosphoserine" evidence="12 15 16">
    <location>
        <position position="867"/>
    </location>
</feature>
<feature type="modified residue" description="Phosphoserine" evidence="13 16 17">
    <location>
        <position position="915"/>
    </location>
</feature>
<feature type="modified residue" description="Phosphothreonine" evidence="13">
    <location>
        <position position="917"/>
    </location>
</feature>
<feature type="modified residue" description="Phosphoserine" evidence="13 16">
    <location>
        <position position="936"/>
    </location>
</feature>
<feature type="modified residue" description="Phosphoserine" evidence="16 17">
    <location>
        <position position="973"/>
    </location>
</feature>
<feature type="modified residue" description="Phosphoserine" evidence="11 14 16">
    <location>
        <position position="991"/>
    </location>
</feature>
<feature type="modified residue" description="Phosphoserine" evidence="16">
    <location>
        <position position="1124"/>
    </location>
</feature>
<feature type="modified residue" description="Phosphoserine" evidence="12">
    <location>
        <position position="1128"/>
    </location>
</feature>
<feature type="modified residue" description="Phosphoserine" evidence="11 12 16 17">
    <location>
        <position position="1202"/>
    </location>
</feature>
<feature type="modified residue" description="Phosphoserine" evidence="16 17">
    <location>
        <position position="1229"/>
    </location>
</feature>
<feature type="modified residue" description="Phosphoserine" evidence="13">
    <location>
        <position position="1359"/>
    </location>
</feature>
<feature type="modified residue" description="Phosphoserine" evidence="13 15 16 17">
    <location>
        <position position="1360"/>
    </location>
</feature>
<feature type="modified residue" description="Phosphoserine" evidence="13 16">
    <location>
        <position position="1371"/>
    </location>
</feature>
<feature type="modified residue" description="Phosphothreonine" evidence="13">
    <location>
        <position position="1404"/>
    </location>
</feature>
<feature type="splice variant" id="VSP_039187" description="In isoform 3." evidence="9">
    <location>
        <position position="446"/>
    </location>
</feature>
<feature type="splice variant" id="VSP_023247" description="In isoform 2." evidence="9">
    <original>VYSPGLPPAPAQPSSIPPCALV</original>
    <variation>PQSQPVKPLQPATRRRRPRPPG</variation>
    <location>
        <begin position="1473"/>
        <end position="1494"/>
    </location>
</feature>
<feature type="splice variant" id="VSP_023248" description="In isoform 2." evidence="9">
    <location>
        <begin position="1495"/>
        <end position="1649"/>
    </location>
</feature>
<feature type="sequence variant" id="VAR_030727" description="In dbSNP:rs7116027.">
    <original>E</original>
    <variation>A</variation>
    <location>
        <position position="1231"/>
    </location>
</feature>
<feature type="sequence variant" id="VAR_030728" description="In dbSNP:rs7123948.">
    <original>A</original>
    <variation>V</variation>
    <location>
        <position position="1374"/>
    </location>
</feature>
<feature type="sequence variant" id="VAR_030729" description="In dbSNP:rs11246212." evidence="7 8">
    <original>V</original>
    <variation>A</variation>
    <location>
        <position position="1449"/>
    </location>
</feature>
<feature type="sequence conflict" description="In Ref. 1; BAA96066 and 3; AAI46772." evidence="10" ref="1 3">
    <original>R</original>
    <variation>K</variation>
    <location>
        <position position="167"/>
    </location>
</feature>
<accession>Q9P1Y6</accession>
<accession>A6H8W1</accession>
<accession>B7ZM64</accession>
<accession>B9EGP0</accession>
<accession>C9JS82</accession>
<accession>Q6PJP2</accession>
<accession>Q8IVY2</accession>
<accession>Q8N2Y7</accession>
<accession>Q9BSM2</accession>
<sequence length="1649" mass="178666">MDDDSLDELVARSPGPDGHPQVGPADPAGDFEESSVGSSGDSGDDSDSEHGDGTDGEDEGASEEEDLEDRSGSEDSEDDGETLLEVAGTQGKLEAAGSFNSDDDAESCPICLNAFRDQAVGTPENCAHYFCLDCIVEWSKNANSCPVDRTLFKCICIRAQFGGKILRKIPVENTKASEEEEDPTFCEVCGRSDREDRLLLCDGCDAGYHMECLDPPLQEVPVDEWFCPECAAPGVVLAADAGPVSEEEVSLLLADVVPTTSRLRPRAGRTRAIARTRQSERVRATVNRNRISTARRVQHTPGRLGSSLLDEAIEAVATGLSTAVYQRPLTPRTPARRKRKTRRRKKVPGRKKTPSGPSAKSKSSATRSKKRQHRVKKRRGKKVKSEATTRSRIARTLGLRRPVHSSCIPSVLKPVEPSLGLLRADIGAASLSLFGDPYELDPFDSSEELSANPLSPLSAKRRALSRSALQSHQPVARPVSVGLSRRRLPAAVPEPDLEEEPVPDLLGSILSGQSLLMLGSSDVIIHRDGSLSAKRAAPVSFQRNSGSLSRGEEGFKGCLQPRALPSGSPAQGPSGNRPQSTGLSCQGRSRTPARTAGAPVRLDLPAAPGAVQARNLSNGSVPGFRQSHSPWFNGTNKHTLPLASAASKISSRDSKPPCRSVVPGPPLKPAPRRTDISELPRIPKIRRDDGGGRRDAAPAHGQSIEIPSACISRLTGREGTGQPGRGTRAESEASSRVPREPGVHTGSSRPPAPSSHGSLAPLGPSRGKGVGSTFESFRINIPGNMAHSSQLSSPGFCNTFRPVDDKEQRKENPSPLFSIKKTKQLRSEVYDPSDPTGSDSSAPGSSPERSGPGLLPSEITRTISINSPKAQTVQAVRCVTSYTVESIFGTEPEPPLGPSSAMSKLRGAVAAEGASDTEREEPTESQGLAARLRRPSPPEPWDEEDGASCSTFFGSEERTVTCVTVVEPEAPPSPDVLQAATHRVVELRPPSRSRSTSSSRSRKKAKRKRVSREHGRTRSGTRSESRDRSSRSASPSVGEERPRRQRSKAKSRRSSSDRSSSRERAKRKKAKDKSREHRRGPWGHSRRTSRSRSGSPGSSSYEHYESRKKKKRRSASRPRGRECSPTSSLERLCRHKHQRERSHERPDRKESVAWPRDRRKRRSRSPSSEHRAREHRRPRSREKWPQTRSHSPERKGAVREASPAPLAQGEPGREDLPTRLPALGEAHVSPEVATADKAPLQAPPVLEVAAECEPDDLDLDYGDSVEAGHVFDDFSSDAVFIQLDDMSSPPSPESTDSSPERDFPLKPALPPASLAVAAIQREVSLMHDEDPSQPPPLPEGTQEPHLLRPDAAEKAEAPSSPDVAPAGKEDSPSASGRVQEAARPEEVVSQTPLLRSRALVKRVTWNLQESESSAPAEDRAPRAPLHRPQKPREGAWDMEDVAPTGVRQVFSELPFPSHVLPEPGFPDTDPSQVYSPGLPPAPAQPSSIPPCALVSQPTVQFILQGSLPLVGCGAAQTLAPVPAALTPASEPASQATAASNSEEKTPAPRLAAEKTKKEEYMKKLHMQERAVEEVKLAIKPFYQKREVTKEEYKDILRKAVQKICHSKSGEINPVKVANLVKAYVDKYRHMRRHKKPEAGEEPPTQGAEG</sequence>
<protein>
    <recommendedName>
        <fullName>PHD and RING finger domain-containing protein 1</fullName>
    </recommendedName>
</protein>